<comment type="function">
    <text evidence="1">One of the primary rRNA binding proteins, it binds directly to 16S rRNA central domain where it helps coordinate assembly of the platform of the 30S subunit.</text>
</comment>
<comment type="subunit">
    <text evidence="1">Part of the 30S ribosomal subunit. Contacts proteins S5 and S12.</text>
</comment>
<comment type="similarity">
    <text evidence="1">Belongs to the universal ribosomal protein uS8 family.</text>
</comment>
<proteinExistence type="inferred from homology"/>
<gene>
    <name evidence="1" type="primary">rpsH</name>
    <name evidence="1" type="synonym">rps8</name>
    <name type="ordered locus">PMN2A_1116</name>
</gene>
<keyword id="KW-1185">Reference proteome</keyword>
<keyword id="KW-0687">Ribonucleoprotein</keyword>
<keyword id="KW-0689">Ribosomal protein</keyword>
<keyword id="KW-0694">RNA-binding</keyword>
<keyword id="KW-0699">rRNA-binding</keyword>
<sequence length="133" mass="14664">MANHDPISDMLTRIRNASEKRHEKTKVPASRMSLSIAKVLQSEGFIAEINEEGEGFRKQLILGLKYTGKHRSPIIRSMQRVSKPGLRIYKNTRGLPKVLGGLGIAIISTSNGVMSDRDARKQGVGGEVLCYVC</sequence>
<protein>
    <recommendedName>
        <fullName evidence="1">Small ribosomal subunit protein uS8</fullName>
    </recommendedName>
    <alternativeName>
        <fullName evidence="3">30S ribosomal protein S8</fullName>
    </alternativeName>
</protein>
<organism>
    <name type="scientific">Prochlorococcus marinus (strain NATL2A)</name>
    <dbReference type="NCBI Taxonomy" id="59920"/>
    <lineage>
        <taxon>Bacteria</taxon>
        <taxon>Bacillati</taxon>
        <taxon>Cyanobacteriota</taxon>
        <taxon>Cyanophyceae</taxon>
        <taxon>Synechococcales</taxon>
        <taxon>Prochlorococcaceae</taxon>
        <taxon>Prochlorococcus</taxon>
    </lineage>
</organism>
<accession>Q46IS2</accession>
<dbReference type="EMBL" id="CP000095">
    <property type="protein sequence ID" value="AAZ58606.1"/>
    <property type="molecule type" value="Genomic_DNA"/>
</dbReference>
<dbReference type="RefSeq" id="WP_011295460.1">
    <property type="nucleotide sequence ID" value="NC_007335.2"/>
</dbReference>
<dbReference type="SMR" id="Q46IS2"/>
<dbReference type="STRING" id="59920.PMN2A_1116"/>
<dbReference type="KEGG" id="pmn:PMN2A_1116"/>
<dbReference type="HOGENOM" id="CLU_098428_0_2_3"/>
<dbReference type="OrthoDB" id="9802617at2"/>
<dbReference type="PhylomeDB" id="Q46IS2"/>
<dbReference type="Proteomes" id="UP000002535">
    <property type="component" value="Chromosome"/>
</dbReference>
<dbReference type="GO" id="GO:1990904">
    <property type="term" value="C:ribonucleoprotein complex"/>
    <property type="evidence" value="ECO:0007669"/>
    <property type="project" value="UniProtKB-KW"/>
</dbReference>
<dbReference type="GO" id="GO:0005840">
    <property type="term" value="C:ribosome"/>
    <property type="evidence" value="ECO:0007669"/>
    <property type="project" value="UniProtKB-KW"/>
</dbReference>
<dbReference type="GO" id="GO:0019843">
    <property type="term" value="F:rRNA binding"/>
    <property type="evidence" value="ECO:0007669"/>
    <property type="project" value="UniProtKB-UniRule"/>
</dbReference>
<dbReference type="GO" id="GO:0003735">
    <property type="term" value="F:structural constituent of ribosome"/>
    <property type="evidence" value="ECO:0007669"/>
    <property type="project" value="InterPro"/>
</dbReference>
<dbReference type="GO" id="GO:0006412">
    <property type="term" value="P:translation"/>
    <property type="evidence" value="ECO:0007669"/>
    <property type="project" value="UniProtKB-UniRule"/>
</dbReference>
<dbReference type="FunFam" id="3.30.1370.30:FF:000002">
    <property type="entry name" value="30S ribosomal protein S8"/>
    <property type="match status" value="1"/>
</dbReference>
<dbReference type="FunFam" id="3.30.1490.10:FF:000001">
    <property type="entry name" value="30S ribosomal protein S8"/>
    <property type="match status" value="1"/>
</dbReference>
<dbReference type="Gene3D" id="3.30.1370.30">
    <property type="match status" value="1"/>
</dbReference>
<dbReference type="Gene3D" id="3.30.1490.10">
    <property type="match status" value="1"/>
</dbReference>
<dbReference type="HAMAP" id="MF_01302_B">
    <property type="entry name" value="Ribosomal_uS8_B"/>
    <property type="match status" value="1"/>
</dbReference>
<dbReference type="InterPro" id="IPR000630">
    <property type="entry name" value="Ribosomal_uS8"/>
</dbReference>
<dbReference type="InterPro" id="IPR047863">
    <property type="entry name" value="Ribosomal_uS8_CS"/>
</dbReference>
<dbReference type="InterPro" id="IPR035987">
    <property type="entry name" value="Ribosomal_uS8_sf"/>
</dbReference>
<dbReference type="NCBIfam" id="NF001109">
    <property type="entry name" value="PRK00136.1"/>
    <property type="match status" value="1"/>
</dbReference>
<dbReference type="PANTHER" id="PTHR11758">
    <property type="entry name" value="40S RIBOSOMAL PROTEIN S15A"/>
    <property type="match status" value="1"/>
</dbReference>
<dbReference type="Pfam" id="PF00410">
    <property type="entry name" value="Ribosomal_S8"/>
    <property type="match status" value="1"/>
</dbReference>
<dbReference type="SUPFAM" id="SSF56047">
    <property type="entry name" value="Ribosomal protein S8"/>
    <property type="match status" value="1"/>
</dbReference>
<dbReference type="PROSITE" id="PS00053">
    <property type="entry name" value="RIBOSOMAL_S8"/>
    <property type="match status" value="1"/>
</dbReference>
<reference key="1">
    <citation type="journal article" date="2007" name="PLoS Genet.">
        <title>Patterns and implications of gene gain and loss in the evolution of Prochlorococcus.</title>
        <authorList>
            <person name="Kettler G.C."/>
            <person name="Martiny A.C."/>
            <person name="Huang K."/>
            <person name="Zucker J."/>
            <person name="Coleman M.L."/>
            <person name="Rodrigue S."/>
            <person name="Chen F."/>
            <person name="Lapidus A."/>
            <person name="Ferriera S."/>
            <person name="Johnson J."/>
            <person name="Steglich C."/>
            <person name="Church G.M."/>
            <person name="Richardson P."/>
            <person name="Chisholm S.W."/>
        </authorList>
    </citation>
    <scope>NUCLEOTIDE SEQUENCE [LARGE SCALE GENOMIC DNA]</scope>
    <source>
        <strain>NATL2A</strain>
    </source>
</reference>
<evidence type="ECO:0000255" key="1">
    <source>
        <dbReference type="HAMAP-Rule" id="MF_01302"/>
    </source>
</evidence>
<evidence type="ECO:0000256" key="2">
    <source>
        <dbReference type="SAM" id="MobiDB-lite"/>
    </source>
</evidence>
<evidence type="ECO:0000305" key="3"/>
<name>RS8_PROMT</name>
<feature type="chain" id="PRO_0000225880" description="Small ribosomal subunit protein uS8">
    <location>
        <begin position="1"/>
        <end position="133"/>
    </location>
</feature>
<feature type="region of interest" description="Disordered" evidence="2">
    <location>
        <begin position="1"/>
        <end position="28"/>
    </location>
</feature>
<feature type="compositionally biased region" description="Basic and acidic residues" evidence="2">
    <location>
        <begin position="16"/>
        <end position="26"/>
    </location>
</feature>